<reference key="1">
    <citation type="journal article" date="2009" name="PLoS ONE">
        <title>Salmonella paratyphi C: genetic divergence from Salmonella choleraesuis and pathogenic convergence with Salmonella typhi.</title>
        <authorList>
            <person name="Liu W.-Q."/>
            <person name="Feng Y."/>
            <person name="Wang Y."/>
            <person name="Zou Q.-H."/>
            <person name="Chen F."/>
            <person name="Guo J.-T."/>
            <person name="Peng Y.-H."/>
            <person name="Jin Y."/>
            <person name="Li Y.-G."/>
            <person name="Hu S.-N."/>
            <person name="Johnston R.N."/>
            <person name="Liu G.-R."/>
            <person name="Liu S.-L."/>
        </authorList>
    </citation>
    <scope>NUCLEOTIDE SEQUENCE [LARGE SCALE GENOMIC DNA]</scope>
    <source>
        <strain>RKS4594</strain>
    </source>
</reference>
<comment type="function">
    <text evidence="1">Specifically methylates position 2 of adenine 2503 in 23S rRNA and position 2 of adenine 37 in tRNAs. m2A2503 modification seems to play a crucial role in the proofreading step occurring at the peptidyl transferase center and thus would serve to optimize ribosomal fidelity.</text>
</comment>
<comment type="catalytic activity">
    <reaction evidence="1">
        <text>adenosine(2503) in 23S rRNA + 2 reduced [2Fe-2S]-[ferredoxin] + 2 S-adenosyl-L-methionine = 2-methyladenosine(2503) in 23S rRNA + 5'-deoxyadenosine + L-methionine + 2 oxidized [2Fe-2S]-[ferredoxin] + S-adenosyl-L-homocysteine</text>
        <dbReference type="Rhea" id="RHEA:42916"/>
        <dbReference type="Rhea" id="RHEA-COMP:10000"/>
        <dbReference type="Rhea" id="RHEA-COMP:10001"/>
        <dbReference type="Rhea" id="RHEA-COMP:10152"/>
        <dbReference type="Rhea" id="RHEA-COMP:10282"/>
        <dbReference type="ChEBI" id="CHEBI:17319"/>
        <dbReference type="ChEBI" id="CHEBI:33737"/>
        <dbReference type="ChEBI" id="CHEBI:33738"/>
        <dbReference type="ChEBI" id="CHEBI:57844"/>
        <dbReference type="ChEBI" id="CHEBI:57856"/>
        <dbReference type="ChEBI" id="CHEBI:59789"/>
        <dbReference type="ChEBI" id="CHEBI:74411"/>
        <dbReference type="ChEBI" id="CHEBI:74497"/>
        <dbReference type="EC" id="2.1.1.192"/>
    </reaction>
</comment>
<comment type="catalytic activity">
    <reaction evidence="1">
        <text>adenosine(37) in tRNA + 2 reduced [2Fe-2S]-[ferredoxin] + 2 S-adenosyl-L-methionine = 2-methyladenosine(37) in tRNA + 5'-deoxyadenosine + L-methionine + 2 oxidized [2Fe-2S]-[ferredoxin] + S-adenosyl-L-homocysteine</text>
        <dbReference type="Rhea" id="RHEA:43332"/>
        <dbReference type="Rhea" id="RHEA-COMP:10000"/>
        <dbReference type="Rhea" id="RHEA-COMP:10001"/>
        <dbReference type="Rhea" id="RHEA-COMP:10162"/>
        <dbReference type="Rhea" id="RHEA-COMP:10485"/>
        <dbReference type="ChEBI" id="CHEBI:17319"/>
        <dbReference type="ChEBI" id="CHEBI:33737"/>
        <dbReference type="ChEBI" id="CHEBI:33738"/>
        <dbReference type="ChEBI" id="CHEBI:57844"/>
        <dbReference type="ChEBI" id="CHEBI:57856"/>
        <dbReference type="ChEBI" id="CHEBI:59789"/>
        <dbReference type="ChEBI" id="CHEBI:74411"/>
        <dbReference type="ChEBI" id="CHEBI:74497"/>
        <dbReference type="EC" id="2.1.1.192"/>
    </reaction>
</comment>
<comment type="cofactor">
    <cofactor evidence="1">
        <name>[4Fe-4S] cluster</name>
        <dbReference type="ChEBI" id="CHEBI:49883"/>
    </cofactor>
    <text evidence="1">Binds 1 [4Fe-4S] cluster. The cluster is coordinated with 3 cysteines and an exchangeable S-adenosyl-L-methionine.</text>
</comment>
<comment type="subcellular location">
    <subcellularLocation>
        <location evidence="1">Cytoplasm</location>
    </subcellularLocation>
</comment>
<comment type="miscellaneous">
    <text evidence="1">Reaction proceeds by a ping-pong mechanism involving intermediate methylation of a conserved cysteine residue.</text>
</comment>
<comment type="similarity">
    <text evidence="1">Belongs to the radical SAM superfamily. RlmN family.</text>
</comment>
<sequence>MSEQIVTPESSTPVVLNNETKINLLDLNRQQMREFFKNLGEKPFRADQVMKWMYHYCCDNFDEMTDINKVLRGKLKEVAEIRAPEVVEEQRSSDGTIKWAIAVGDQRVETVYIPEDDRATLCVSSQVGCALECKFCSTAQQGFNRNLRVSEIIGQVWRAAKIVGAAKVTGQRPITNVVMMGMGEPLLNLTNVVPAMEIMLDDFGFGLSKRRVTLSTSGVVPALDKLGDMIDVALAISLHAPNDTIRDEIVPINKKYNIETFLGAVRRYLEKSNANQGRVTIEYVMLDHVNDGTEHAHQLAELLKETPCKINLIPWNPFPGAPYGRSSNSRIDRFSKVLMSYGFTTIVRKTRGDDIDAACGQLAGDVIDRTKRTLRKRMQGEVIDIKAI</sequence>
<name>RLMN_SALPC</name>
<gene>
    <name evidence="1" type="primary">rlmN</name>
    <name type="ordered locus">SPC_1129</name>
</gene>
<feature type="chain" id="PRO_1000188603" description="Dual-specificity RNA methyltransferase RlmN">
    <location>
        <begin position="1"/>
        <end position="388"/>
    </location>
</feature>
<feature type="domain" description="Radical SAM core" evidence="2">
    <location>
        <begin position="115"/>
        <end position="354"/>
    </location>
</feature>
<feature type="active site" description="Proton acceptor" evidence="1">
    <location>
        <position position="109"/>
    </location>
</feature>
<feature type="active site" description="S-methylcysteine intermediate" evidence="1">
    <location>
        <position position="359"/>
    </location>
</feature>
<feature type="binding site" evidence="1">
    <location>
        <position position="129"/>
    </location>
    <ligand>
        <name>[4Fe-4S] cluster</name>
        <dbReference type="ChEBI" id="CHEBI:49883"/>
        <note>4Fe-4S-S-AdoMet</note>
    </ligand>
</feature>
<feature type="binding site" evidence="1">
    <location>
        <position position="133"/>
    </location>
    <ligand>
        <name>[4Fe-4S] cluster</name>
        <dbReference type="ChEBI" id="CHEBI:49883"/>
        <note>4Fe-4S-S-AdoMet</note>
    </ligand>
</feature>
<feature type="binding site" evidence="1">
    <location>
        <position position="136"/>
    </location>
    <ligand>
        <name>[4Fe-4S] cluster</name>
        <dbReference type="ChEBI" id="CHEBI:49883"/>
        <note>4Fe-4S-S-AdoMet</note>
    </ligand>
</feature>
<feature type="binding site" evidence="1">
    <location>
        <begin position="183"/>
        <end position="184"/>
    </location>
    <ligand>
        <name>S-adenosyl-L-methionine</name>
        <dbReference type="ChEBI" id="CHEBI:59789"/>
    </ligand>
</feature>
<feature type="binding site" evidence="1">
    <location>
        <position position="215"/>
    </location>
    <ligand>
        <name>S-adenosyl-L-methionine</name>
        <dbReference type="ChEBI" id="CHEBI:59789"/>
    </ligand>
</feature>
<feature type="binding site" evidence="1">
    <location>
        <begin position="237"/>
        <end position="239"/>
    </location>
    <ligand>
        <name>S-adenosyl-L-methionine</name>
        <dbReference type="ChEBI" id="CHEBI:59789"/>
    </ligand>
</feature>
<feature type="binding site" evidence="1">
    <location>
        <position position="316"/>
    </location>
    <ligand>
        <name>S-adenosyl-L-methionine</name>
        <dbReference type="ChEBI" id="CHEBI:59789"/>
    </ligand>
</feature>
<feature type="disulfide bond" description="(transient)" evidence="1">
    <location>
        <begin position="122"/>
        <end position="359"/>
    </location>
</feature>
<evidence type="ECO:0000255" key="1">
    <source>
        <dbReference type="HAMAP-Rule" id="MF_01849"/>
    </source>
</evidence>
<evidence type="ECO:0000255" key="2">
    <source>
        <dbReference type="PROSITE-ProRule" id="PRU01266"/>
    </source>
</evidence>
<accession>C0PYM8</accession>
<organism>
    <name type="scientific">Salmonella paratyphi C (strain RKS4594)</name>
    <dbReference type="NCBI Taxonomy" id="476213"/>
    <lineage>
        <taxon>Bacteria</taxon>
        <taxon>Pseudomonadati</taxon>
        <taxon>Pseudomonadota</taxon>
        <taxon>Gammaproteobacteria</taxon>
        <taxon>Enterobacterales</taxon>
        <taxon>Enterobacteriaceae</taxon>
        <taxon>Salmonella</taxon>
    </lineage>
</organism>
<keyword id="KW-0004">4Fe-4S</keyword>
<keyword id="KW-0963">Cytoplasm</keyword>
<keyword id="KW-1015">Disulfide bond</keyword>
<keyword id="KW-0408">Iron</keyword>
<keyword id="KW-0411">Iron-sulfur</keyword>
<keyword id="KW-0479">Metal-binding</keyword>
<keyword id="KW-0489">Methyltransferase</keyword>
<keyword id="KW-0698">rRNA processing</keyword>
<keyword id="KW-0949">S-adenosyl-L-methionine</keyword>
<keyword id="KW-0808">Transferase</keyword>
<keyword id="KW-0819">tRNA processing</keyword>
<protein>
    <recommendedName>
        <fullName evidence="1">Dual-specificity RNA methyltransferase RlmN</fullName>
        <ecNumber evidence="1">2.1.1.192</ecNumber>
    </recommendedName>
    <alternativeName>
        <fullName evidence="1">23S rRNA (adenine(2503)-C(2))-methyltransferase</fullName>
    </alternativeName>
    <alternativeName>
        <fullName evidence="1">23S rRNA m2A2503 methyltransferase</fullName>
    </alternativeName>
    <alternativeName>
        <fullName evidence="1">Ribosomal RNA large subunit methyltransferase N</fullName>
    </alternativeName>
    <alternativeName>
        <fullName evidence="1">tRNA (adenine(37)-C(2))-methyltransferase</fullName>
    </alternativeName>
    <alternativeName>
        <fullName evidence="1">tRNA m2A37 methyltransferase</fullName>
    </alternativeName>
</protein>
<proteinExistence type="inferred from homology"/>
<dbReference type="EC" id="2.1.1.192" evidence="1"/>
<dbReference type="EMBL" id="CP000857">
    <property type="protein sequence ID" value="ACN45295.1"/>
    <property type="molecule type" value="Genomic_DNA"/>
</dbReference>
<dbReference type="RefSeq" id="WP_000003206.1">
    <property type="nucleotide sequence ID" value="NC_012125.1"/>
</dbReference>
<dbReference type="SMR" id="C0PYM8"/>
<dbReference type="KEGG" id="sei:SPC_1129"/>
<dbReference type="HOGENOM" id="CLU_029101_0_0_6"/>
<dbReference type="Proteomes" id="UP000001599">
    <property type="component" value="Chromosome"/>
</dbReference>
<dbReference type="GO" id="GO:0005737">
    <property type="term" value="C:cytoplasm"/>
    <property type="evidence" value="ECO:0007669"/>
    <property type="project" value="UniProtKB-SubCell"/>
</dbReference>
<dbReference type="GO" id="GO:0051539">
    <property type="term" value="F:4 iron, 4 sulfur cluster binding"/>
    <property type="evidence" value="ECO:0007669"/>
    <property type="project" value="UniProtKB-UniRule"/>
</dbReference>
<dbReference type="GO" id="GO:0046872">
    <property type="term" value="F:metal ion binding"/>
    <property type="evidence" value="ECO:0007669"/>
    <property type="project" value="UniProtKB-KW"/>
</dbReference>
<dbReference type="GO" id="GO:0070040">
    <property type="term" value="F:rRNA (adenine(2503)-C2-)-methyltransferase activity"/>
    <property type="evidence" value="ECO:0007669"/>
    <property type="project" value="UniProtKB-UniRule"/>
</dbReference>
<dbReference type="GO" id="GO:0019843">
    <property type="term" value="F:rRNA binding"/>
    <property type="evidence" value="ECO:0007669"/>
    <property type="project" value="UniProtKB-UniRule"/>
</dbReference>
<dbReference type="GO" id="GO:0002935">
    <property type="term" value="F:tRNA (adenine(37)-C2)-methyltransferase activity"/>
    <property type="evidence" value="ECO:0007669"/>
    <property type="project" value="UniProtKB-UniRule"/>
</dbReference>
<dbReference type="GO" id="GO:0000049">
    <property type="term" value="F:tRNA binding"/>
    <property type="evidence" value="ECO:0007669"/>
    <property type="project" value="UniProtKB-UniRule"/>
</dbReference>
<dbReference type="GO" id="GO:0070475">
    <property type="term" value="P:rRNA base methylation"/>
    <property type="evidence" value="ECO:0007669"/>
    <property type="project" value="UniProtKB-UniRule"/>
</dbReference>
<dbReference type="GO" id="GO:0030488">
    <property type="term" value="P:tRNA methylation"/>
    <property type="evidence" value="ECO:0007669"/>
    <property type="project" value="UniProtKB-UniRule"/>
</dbReference>
<dbReference type="CDD" id="cd01335">
    <property type="entry name" value="Radical_SAM"/>
    <property type="match status" value="1"/>
</dbReference>
<dbReference type="FunFam" id="1.10.150.530:FF:000001">
    <property type="entry name" value="Dual-specificity RNA methyltransferase RlmN"/>
    <property type="match status" value="1"/>
</dbReference>
<dbReference type="FunFam" id="3.20.20.70:FF:000008">
    <property type="entry name" value="Dual-specificity RNA methyltransferase RlmN"/>
    <property type="match status" value="1"/>
</dbReference>
<dbReference type="Gene3D" id="1.10.150.530">
    <property type="match status" value="1"/>
</dbReference>
<dbReference type="Gene3D" id="3.20.20.70">
    <property type="entry name" value="Aldolase class I"/>
    <property type="match status" value="1"/>
</dbReference>
<dbReference type="HAMAP" id="MF_01849">
    <property type="entry name" value="RNA_methyltr_RlmN"/>
    <property type="match status" value="1"/>
</dbReference>
<dbReference type="InterPro" id="IPR013785">
    <property type="entry name" value="Aldolase_TIM"/>
</dbReference>
<dbReference type="InterPro" id="IPR040072">
    <property type="entry name" value="Methyltransferase_A"/>
</dbReference>
<dbReference type="InterPro" id="IPR048641">
    <property type="entry name" value="RlmN_N"/>
</dbReference>
<dbReference type="InterPro" id="IPR027492">
    <property type="entry name" value="RNA_MTrfase_RlmN"/>
</dbReference>
<dbReference type="InterPro" id="IPR004383">
    <property type="entry name" value="rRNA_lsu_MTrfase_RlmN/Cfr"/>
</dbReference>
<dbReference type="InterPro" id="IPR007197">
    <property type="entry name" value="rSAM"/>
</dbReference>
<dbReference type="NCBIfam" id="NF008396">
    <property type="entry name" value="PRK11194.1"/>
    <property type="match status" value="1"/>
</dbReference>
<dbReference type="NCBIfam" id="TIGR00048">
    <property type="entry name" value="rRNA_mod_RlmN"/>
    <property type="match status" value="1"/>
</dbReference>
<dbReference type="PANTHER" id="PTHR30544">
    <property type="entry name" value="23S RRNA METHYLTRANSFERASE"/>
    <property type="match status" value="1"/>
</dbReference>
<dbReference type="PANTHER" id="PTHR30544:SF5">
    <property type="entry name" value="RADICAL SAM CORE DOMAIN-CONTAINING PROTEIN"/>
    <property type="match status" value="1"/>
</dbReference>
<dbReference type="Pfam" id="PF04055">
    <property type="entry name" value="Radical_SAM"/>
    <property type="match status" value="1"/>
</dbReference>
<dbReference type="Pfam" id="PF21016">
    <property type="entry name" value="RlmN_N"/>
    <property type="match status" value="1"/>
</dbReference>
<dbReference type="PIRSF" id="PIRSF006004">
    <property type="entry name" value="CHP00048"/>
    <property type="match status" value="1"/>
</dbReference>
<dbReference type="SFLD" id="SFLDF00275">
    <property type="entry name" value="adenosine_C2_methyltransferase"/>
    <property type="match status" value="1"/>
</dbReference>
<dbReference type="SFLD" id="SFLDS00029">
    <property type="entry name" value="Radical_SAM"/>
    <property type="match status" value="1"/>
</dbReference>
<dbReference type="SUPFAM" id="SSF102114">
    <property type="entry name" value="Radical SAM enzymes"/>
    <property type="match status" value="1"/>
</dbReference>
<dbReference type="PROSITE" id="PS51918">
    <property type="entry name" value="RADICAL_SAM"/>
    <property type="match status" value="1"/>
</dbReference>